<protein>
    <recommendedName>
        <fullName evidence="1">Pyridoxal 5'-phosphate synthase subunit PdxT</fullName>
        <ecNumber evidence="1">4.3.3.6</ecNumber>
    </recommendedName>
    <alternativeName>
        <fullName evidence="1">Pdx2</fullName>
    </alternativeName>
    <alternativeName>
        <fullName evidence="1">Pyridoxal 5'-phosphate synthase glutaminase subunit</fullName>
        <ecNumber evidence="1">3.5.1.2</ecNumber>
    </alternativeName>
</protein>
<keyword id="KW-0315">Glutamine amidotransferase</keyword>
<keyword id="KW-0378">Hydrolase</keyword>
<keyword id="KW-0456">Lyase</keyword>
<keyword id="KW-0663">Pyridoxal phosphate</keyword>
<keyword id="KW-1185">Reference proteome</keyword>
<sequence>MIYREDSRRNTIGVLDLQGGVCEHLEHLERLGIACKRVKEPLDFEGVAGLILPGGESTCLSRLIRIFHLEGCILDAFQKGMKIWGTCAGAILLATGILGERPHLGLIDMDIERNGFGSQLDSFCIEAALPELSADPVPLTFIRAPKIRRVGSDVRILLQLQDYIVAAENDRVLVTVFHPELTPCIVFHKHFVHKCGICCTPEDDLADSDAQWNSRSWMRLAPHV</sequence>
<feature type="chain" id="PRO_0000293015" description="Pyridoxal 5'-phosphate synthase subunit PdxT">
    <location>
        <begin position="1"/>
        <end position="224"/>
    </location>
</feature>
<feature type="active site" description="Nucleophile" evidence="1">
    <location>
        <position position="87"/>
    </location>
</feature>
<feature type="active site" description="Charge relay system" evidence="1">
    <location>
        <position position="178"/>
    </location>
</feature>
<feature type="active site" description="Charge relay system" evidence="1">
    <location>
        <position position="180"/>
    </location>
</feature>
<feature type="binding site" evidence="1">
    <location>
        <begin position="55"/>
        <end position="57"/>
    </location>
    <ligand>
        <name>L-glutamine</name>
        <dbReference type="ChEBI" id="CHEBI:58359"/>
    </ligand>
</feature>
<feature type="binding site" evidence="1">
    <location>
        <position position="113"/>
    </location>
    <ligand>
        <name>L-glutamine</name>
        <dbReference type="ChEBI" id="CHEBI:58359"/>
    </ligand>
</feature>
<feature type="binding site" evidence="1">
    <location>
        <begin position="142"/>
        <end position="143"/>
    </location>
    <ligand>
        <name>L-glutamine</name>
        <dbReference type="ChEBI" id="CHEBI:58359"/>
    </ligand>
</feature>
<proteinExistence type="inferred from homology"/>
<evidence type="ECO:0000255" key="1">
    <source>
        <dbReference type="HAMAP-Rule" id="MF_01615"/>
    </source>
</evidence>
<dbReference type="EC" id="4.3.3.6" evidence="1"/>
<dbReference type="EC" id="3.5.1.2" evidence="1"/>
<dbReference type="EMBL" id="CP000252">
    <property type="protein sequence ID" value="ABC78875.1"/>
    <property type="molecule type" value="Genomic_DNA"/>
</dbReference>
<dbReference type="RefSeq" id="WP_011418891.1">
    <property type="nucleotide sequence ID" value="NC_007759.1"/>
</dbReference>
<dbReference type="SMR" id="Q2LXR3"/>
<dbReference type="STRING" id="56780.SYN_01686"/>
<dbReference type="MEROPS" id="C26.A32"/>
<dbReference type="KEGG" id="sat:SYN_01686"/>
<dbReference type="eggNOG" id="COG0311">
    <property type="taxonomic scope" value="Bacteria"/>
</dbReference>
<dbReference type="HOGENOM" id="CLU_069674_2_0_7"/>
<dbReference type="InParanoid" id="Q2LXR3"/>
<dbReference type="OrthoDB" id="9810320at2"/>
<dbReference type="UniPathway" id="UPA00245"/>
<dbReference type="Proteomes" id="UP000001933">
    <property type="component" value="Chromosome"/>
</dbReference>
<dbReference type="GO" id="GO:0005829">
    <property type="term" value="C:cytosol"/>
    <property type="evidence" value="ECO:0007669"/>
    <property type="project" value="TreeGrafter"/>
</dbReference>
<dbReference type="GO" id="GO:1903600">
    <property type="term" value="C:glutaminase complex"/>
    <property type="evidence" value="ECO:0007669"/>
    <property type="project" value="TreeGrafter"/>
</dbReference>
<dbReference type="GO" id="GO:0004359">
    <property type="term" value="F:glutaminase activity"/>
    <property type="evidence" value="ECO:0007669"/>
    <property type="project" value="UniProtKB-UniRule"/>
</dbReference>
<dbReference type="GO" id="GO:0036381">
    <property type="term" value="F:pyridoxal 5'-phosphate synthase (glutamine hydrolysing) activity"/>
    <property type="evidence" value="ECO:0007669"/>
    <property type="project" value="UniProtKB-UniRule"/>
</dbReference>
<dbReference type="GO" id="GO:0006543">
    <property type="term" value="P:glutamine catabolic process"/>
    <property type="evidence" value="ECO:0007669"/>
    <property type="project" value="UniProtKB-UniRule"/>
</dbReference>
<dbReference type="GO" id="GO:0042823">
    <property type="term" value="P:pyridoxal phosphate biosynthetic process"/>
    <property type="evidence" value="ECO:0007669"/>
    <property type="project" value="UniProtKB-UniRule"/>
</dbReference>
<dbReference type="GO" id="GO:0008614">
    <property type="term" value="P:pyridoxine metabolic process"/>
    <property type="evidence" value="ECO:0007669"/>
    <property type="project" value="TreeGrafter"/>
</dbReference>
<dbReference type="Gene3D" id="3.40.50.880">
    <property type="match status" value="1"/>
</dbReference>
<dbReference type="HAMAP" id="MF_01615">
    <property type="entry name" value="PdxT"/>
    <property type="match status" value="1"/>
</dbReference>
<dbReference type="InterPro" id="IPR029062">
    <property type="entry name" value="Class_I_gatase-like"/>
</dbReference>
<dbReference type="InterPro" id="IPR002161">
    <property type="entry name" value="PdxT/SNO"/>
</dbReference>
<dbReference type="NCBIfam" id="TIGR03800">
    <property type="entry name" value="PLP_synth_Pdx2"/>
    <property type="match status" value="1"/>
</dbReference>
<dbReference type="PANTHER" id="PTHR31559">
    <property type="entry name" value="PYRIDOXAL 5'-PHOSPHATE SYNTHASE SUBUNIT SNO"/>
    <property type="match status" value="1"/>
</dbReference>
<dbReference type="PANTHER" id="PTHR31559:SF0">
    <property type="entry name" value="PYRIDOXAL 5'-PHOSPHATE SYNTHASE SUBUNIT SNO1-RELATED"/>
    <property type="match status" value="1"/>
</dbReference>
<dbReference type="Pfam" id="PF01174">
    <property type="entry name" value="SNO"/>
    <property type="match status" value="1"/>
</dbReference>
<dbReference type="PIRSF" id="PIRSF005639">
    <property type="entry name" value="Glut_amidoT_SNO"/>
    <property type="match status" value="1"/>
</dbReference>
<dbReference type="SUPFAM" id="SSF52317">
    <property type="entry name" value="Class I glutamine amidotransferase-like"/>
    <property type="match status" value="1"/>
</dbReference>
<dbReference type="PROSITE" id="PS51130">
    <property type="entry name" value="PDXT_SNO_2"/>
    <property type="match status" value="1"/>
</dbReference>
<gene>
    <name evidence="1" type="primary">pdxT</name>
    <name type="ordered locus">SYNAS_29960</name>
    <name type="ORF">SYN_01686</name>
</gene>
<name>PDXT_SYNAS</name>
<organism>
    <name type="scientific">Syntrophus aciditrophicus (strain SB)</name>
    <dbReference type="NCBI Taxonomy" id="56780"/>
    <lineage>
        <taxon>Bacteria</taxon>
        <taxon>Pseudomonadati</taxon>
        <taxon>Thermodesulfobacteriota</taxon>
        <taxon>Syntrophia</taxon>
        <taxon>Syntrophales</taxon>
        <taxon>Syntrophaceae</taxon>
        <taxon>Syntrophus</taxon>
    </lineage>
</organism>
<accession>Q2LXR3</accession>
<comment type="function">
    <text evidence="1">Catalyzes the hydrolysis of glutamine to glutamate and ammonia as part of the biosynthesis of pyridoxal 5'-phosphate. The resulting ammonia molecule is channeled to the active site of PdxS.</text>
</comment>
<comment type="catalytic activity">
    <reaction evidence="1">
        <text>aldehydo-D-ribose 5-phosphate + D-glyceraldehyde 3-phosphate + L-glutamine = pyridoxal 5'-phosphate + L-glutamate + phosphate + 3 H2O + H(+)</text>
        <dbReference type="Rhea" id="RHEA:31507"/>
        <dbReference type="ChEBI" id="CHEBI:15377"/>
        <dbReference type="ChEBI" id="CHEBI:15378"/>
        <dbReference type="ChEBI" id="CHEBI:29985"/>
        <dbReference type="ChEBI" id="CHEBI:43474"/>
        <dbReference type="ChEBI" id="CHEBI:58273"/>
        <dbReference type="ChEBI" id="CHEBI:58359"/>
        <dbReference type="ChEBI" id="CHEBI:59776"/>
        <dbReference type="ChEBI" id="CHEBI:597326"/>
        <dbReference type="EC" id="4.3.3.6"/>
    </reaction>
</comment>
<comment type="catalytic activity">
    <reaction evidence="1">
        <text>L-glutamine + H2O = L-glutamate + NH4(+)</text>
        <dbReference type="Rhea" id="RHEA:15889"/>
        <dbReference type="ChEBI" id="CHEBI:15377"/>
        <dbReference type="ChEBI" id="CHEBI:28938"/>
        <dbReference type="ChEBI" id="CHEBI:29985"/>
        <dbReference type="ChEBI" id="CHEBI:58359"/>
        <dbReference type="EC" id="3.5.1.2"/>
    </reaction>
</comment>
<comment type="pathway">
    <text evidence="1">Cofactor biosynthesis; pyridoxal 5'-phosphate biosynthesis.</text>
</comment>
<comment type="subunit">
    <text evidence="1">In the presence of PdxS, forms a dodecamer of heterodimers. Only shows activity in the heterodimer.</text>
</comment>
<comment type="similarity">
    <text evidence="1">Belongs to the glutaminase PdxT/SNO family.</text>
</comment>
<reference key="1">
    <citation type="journal article" date="2007" name="Proc. Natl. Acad. Sci. U.S.A.">
        <title>The genome of Syntrophus aciditrophicus: life at the thermodynamic limit of microbial growth.</title>
        <authorList>
            <person name="McInerney M.J."/>
            <person name="Rohlin L."/>
            <person name="Mouttaki H."/>
            <person name="Kim U."/>
            <person name="Krupp R.S."/>
            <person name="Rios-Hernandez L."/>
            <person name="Sieber J."/>
            <person name="Struchtemeyer C.G."/>
            <person name="Bhattacharyya A."/>
            <person name="Campbell J.W."/>
            <person name="Gunsalus R.P."/>
        </authorList>
    </citation>
    <scope>NUCLEOTIDE SEQUENCE [LARGE SCALE GENOMIC DNA]</scope>
    <source>
        <strain>SB</strain>
    </source>
</reference>